<comment type="function">
    <text evidence="1">Catalyzes the reversible interconversion of serine and glycine with tetrahydrofolate (THF) serving as the one-carbon carrier. This reaction serves as the major source of one-carbon groups required for the biosynthesis of purines, thymidylate, methionine, and other important biomolecules. Also exhibits THF-independent aldolase activity toward beta-hydroxyamino acids, producing glycine and aldehydes, via a retro-aldol mechanism.</text>
</comment>
<comment type="catalytic activity">
    <reaction evidence="1">
        <text>(6R)-5,10-methylene-5,6,7,8-tetrahydrofolate + glycine + H2O = (6S)-5,6,7,8-tetrahydrofolate + L-serine</text>
        <dbReference type="Rhea" id="RHEA:15481"/>
        <dbReference type="ChEBI" id="CHEBI:15377"/>
        <dbReference type="ChEBI" id="CHEBI:15636"/>
        <dbReference type="ChEBI" id="CHEBI:33384"/>
        <dbReference type="ChEBI" id="CHEBI:57305"/>
        <dbReference type="ChEBI" id="CHEBI:57453"/>
        <dbReference type="EC" id="2.1.2.1"/>
    </reaction>
</comment>
<comment type="cofactor">
    <cofactor evidence="1">
        <name>pyridoxal 5'-phosphate</name>
        <dbReference type="ChEBI" id="CHEBI:597326"/>
    </cofactor>
</comment>
<comment type="pathway">
    <text evidence="1">One-carbon metabolism; tetrahydrofolate interconversion.</text>
</comment>
<comment type="pathway">
    <text evidence="1">Amino-acid biosynthesis; glycine biosynthesis; glycine from L-serine: step 1/1.</text>
</comment>
<comment type="subunit">
    <text evidence="1">Homodimer.</text>
</comment>
<comment type="subcellular location">
    <subcellularLocation>
        <location evidence="1">Cytoplasm</location>
    </subcellularLocation>
</comment>
<comment type="similarity">
    <text evidence="1">Belongs to the SHMT family.</text>
</comment>
<sequence length="417" mass="45586">MFDESYTIKNFDDVLFKAISDEKRRQEEHIELIASENYVSPRVLEAQGSVLTNKYAEGYPGKRYYGGCEFVDVAEELAISRAKLLFGAHYVNVQPHSGSQANAAVMMALLSPGDTFMGMALPHGGHLTHGSKVNFSGKLYHSVEYGVDNNTGLIDYDALEKLALQHKPKLIIAGFSAYSRILDWARFREIADKVGAYLMADIAHVAGLVAVGLYPSPVPYADVVTTTTHKTLRGPRGGLILCKENEEIEKKLNSAVFPGMQGGPLMHVIAAKAVAFAEALLPEFKTYQQQVLANARTMCSVLQSRGYDIVSGGTDNHLLLVDLINKGITGKEADAALGRANITVNKNSVPNDPRSPFVTSGLRLGTPAATTRGFKEREITLLSNWVADVLDNVHDETNISRVKTQVLLLCREFPVYA</sequence>
<accession>Q5WYH4</accession>
<organism>
    <name type="scientific">Legionella pneumophila (strain Lens)</name>
    <dbReference type="NCBI Taxonomy" id="297245"/>
    <lineage>
        <taxon>Bacteria</taxon>
        <taxon>Pseudomonadati</taxon>
        <taxon>Pseudomonadota</taxon>
        <taxon>Gammaproteobacteria</taxon>
        <taxon>Legionellales</taxon>
        <taxon>Legionellaceae</taxon>
        <taxon>Legionella</taxon>
    </lineage>
</organism>
<feature type="chain" id="PRO_0000113595" description="Serine hydroxymethyltransferase">
    <location>
        <begin position="1"/>
        <end position="417"/>
    </location>
</feature>
<feature type="binding site" evidence="1">
    <location>
        <position position="121"/>
    </location>
    <ligand>
        <name>(6S)-5,6,7,8-tetrahydrofolate</name>
        <dbReference type="ChEBI" id="CHEBI:57453"/>
    </ligand>
</feature>
<feature type="binding site" evidence="1">
    <location>
        <begin position="125"/>
        <end position="127"/>
    </location>
    <ligand>
        <name>(6S)-5,6,7,8-tetrahydrofolate</name>
        <dbReference type="ChEBI" id="CHEBI:57453"/>
    </ligand>
</feature>
<feature type="binding site" evidence="1">
    <location>
        <begin position="355"/>
        <end position="357"/>
    </location>
    <ligand>
        <name>(6S)-5,6,7,8-tetrahydrofolate</name>
        <dbReference type="ChEBI" id="CHEBI:57453"/>
    </ligand>
</feature>
<feature type="site" description="Plays an important role in substrate specificity" evidence="1">
    <location>
        <position position="229"/>
    </location>
</feature>
<feature type="modified residue" description="N6-(pyridoxal phosphate)lysine" evidence="1">
    <location>
        <position position="230"/>
    </location>
</feature>
<evidence type="ECO:0000255" key="1">
    <source>
        <dbReference type="HAMAP-Rule" id="MF_00051"/>
    </source>
</evidence>
<gene>
    <name evidence="1" type="primary">glyA</name>
    <name type="ordered locus">lpl0762</name>
</gene>
<reference key="1">
    <citation type="journal article" date="2004" name="Nat. Genet.">
        <title>Evidence in the Legionella pneumophila genome for exploitation of host cell functions and high genome plasticity.</title>
        <authorList>
            <person name="Cazalet C."/>
            <person name="Rusniok C."/>
            <person name="Brueggemann H."/>
            <person name="Zidane N."/>
            <person name="Magnier A."/>
            <person name="Ma L."/>
            <person name="Tichit M."/>
            <person name="Jarraud S."/>
            <person name="Bouchier C."/>
            <person name="Vandenesch F."/>
            <person name="Kunst F."/>
            <person name="Etienne J."/>
            <person name="Glaser P."/>
            <person name="Buchrieser C."/>
        </authorList>
    </citation>
    <scope>NUCLEOTIDE SEQUENCE [LARGE SCALE GENOMIC DNA]</scope>
    <source>
        <strain>Lens</strain>
    </source>
</reference>
<keyword id="KW-0028">Amino-acid biosynthesis</keyword>
<keyword id="KW-0963">Cytoplasm</keyword>
<keyword id="KW-0554">One-carbon metabolism</keyword>
<keyword id="KW-0663">Pyridoxal phosphate</keyword>
<keyword id="KW-0808">Transferase</keyword>
<protein>
    <recommendedName>
        <fullName evidence="1">Serine hydroxymethyltransferase</fullName>
        <shortName evidence="1">SHMT</shortName>
        <shortName evidence="1">Serine methylase</shortName>
        <ecNumber evidence="1">2.1.2.1</ecNumber>
    </recommendedName>
</protein>
<name>GLYA_LEGPL</name>
<proteinExistence type="inferred from homology"/>
<dbReference type="EC" id="2.1.2.1" evidence="1"/>
<dbReference type="EMBL" id="CR628337">
    <property type="protein sequence ID" value="CAH14996.1"/>
    <property type="molecule type" value="Genomic_DNA"/>
</dbReference>
<dbReference type="RefSeq" id="WP_011214933.1">
    <property type="nucleotide sequence ID" value="NC_006369.1"/>
</dbReference>
<dbReference type="SMR" id="Q5WYH4"/>
<dbReference type="KEGG" id="lpf:lpl0762"/>
<dbReference type="LegioList" id="lpl0762"/>
<dbReference type="HOGENOM" id="CLU_022477_2_1_6"/>
<dbReference type="UniPathway" id="UPA00193"/>
<dbReference type="UniPathway" id="UPA00288">
    <property type="reaction ID" value="UER01023"/>
</dbReference>
<dbReference type="Proteomes" id="UP000002517">
    <property type="component" value="Chromosome"/>
</dbReference>
<dbReference type="GO" id="GO:0005829">
    <property type="term" value="C:cytosol"/>
    <property type="evidence" value="ECO:0007669"/>
    <property type="project" value="TreeGrafter"/>
</dbReference>
<dbReference type="GO" id="GO:0004372">
    <property type="term" value="F:glycine hydroxymethyltransferase activity"/>
    <property type="evidence" value="ECO:0007669"/>
    <property type="project" value="UniProtKB-UniRule"/>
</dbReference>
<dbReference type="GO" id="GO:0030170">
    <property type="term" value="F:pyridoxal phosphate binding"/>
    <property type="evidence" value="ECO:0007669"/>
    <property type="project" value="UniProtKB-UniRule"/>
</dbReference>
<dbReference type="GO" id="GO:0019264">
    <property type="term" value="P:glycine biosynthetic process from serine"/>
    <property type="evidence" value="ECO:0007669"/>
    <property type="project" value="UniProtKB-UniRule"/>
</dbReference>
<dbReference type="GO" id="GO:0035999">
    <property type="term" value="P:tetrahydrofolate interconversion"/>
    <property type="evidence" value="ECO:0007669"/>
    <property type="project" value="UniProtKB-UniRule"/>
</dbReference>
<dbReference type="CDD" id="cd00378">
    <property type="entry name" value="SHMT"/>
    <property type="match status" value="1"/>
</dbReference>
<dbReference type="FunFam" id="3.40.640.10:FF:000001">
    <property type="entry name" value="Serine hydroxymethyltransferase"/>
    <property type="match status" value="1"/>
</dbReference>
<dbReference type="FunFam" id="3.90.1150.10:FF:000003">
    <property type="entry name" value="Serine hydroxymethyltransferase"/>
    <property type="match status" value="1"/>
</dbReference>
<dbReference type="Gene3D" id="3.90.1150.10">
    <property type="entry name" value="Aspartate Aminotransferase, domain 1"/>
    <property type="match status" value="1"/>
</dbReference>
<dbReference type="Gene3D" id="3.40.640.10">
    <property type="entry name" value="Type I PLP-dependent aspartate aminotransferase-like (Major domain)"/>
    <property type="match status" value="1"/>
</dbReference>
<dbReference type="HAMAP" id="MF_00051">
    <property type="entry name" value="SHMT"/>
    <property type="match status" value="1"/>
</dbReference>
<dbReference type="InterPro" id="IPR015424">
    <property type="entry name" value="PyrdxlP-dep_Trfase"/>
</dbReference>
<dbReference type="InterPro" id="IPR015421">
    <property type="entry name" value="PyrdxlP-dep_Trfase_major"/>
</dbReference>
<dbReference type="InterPro" id="IPR015422">
    <property type="entry name" value="PyrdxlP-dep_Trfase_small"/>
</dbReference>
<dbReference type="InterPro" id="IPR001085">
    <property type="entry name" value="Ser_HO-MeTrfase"/>
</dbReference>
<dbReference type="InterPro" id="IPR049943">
    <property type="entry name" value="Ser_HO-MeTrfase-like"/>
</dbReference>
<dbReference type="InterPro" id="IPR019798">
    <property type="entry name" value="Ser_HO-MeTrfase_PLP_BS"/>
</dbReference>
<dbReference type="InterPro" id="IPR039429">
    <property type="entry name" value="SHMT-like_dom"/>
</dbReference>
<dbReference type="NCBIfam" id="NF000586">
    <property type="entry name" value="PRK00011.1"/>
    <property type="match status" value="1"/>
</dbReference>
<dbReference type="PANTHER" id="PTHR11680">
    <property type="entry name" value="SERINE HYDROXYMETHYLTRANSFERASE"/>
    <property type="match status" value="1"/>
</dbReference>
<dbReference type="PANTHER" id="PTHR11680:SF50">
    <property type="entry name" value="SERINE HYDROXYMETHYLTRANSFERASE"/>
    <property type="match status" value="1"/>
</dbReference>
<dbReference type="Pfam" id="PF00464">
    <property type="entry name" value="SHMT"/>
    <property type="match status" value="1"/>
</dbReference>
<dbReference type="PIRSF" id="PIRSF000412">
    <property type="entry name" value="SHMT"/>
    <property type="match status" value="1"/>
</dbReference>
<dbReference type="SUPFAM" id="SSF53383">
    <property type="entry name" value="PLP-dependent transferases"/>
    <property type="match status" value="1"/>
</dbReference>
<dbReference type="PROSITE" id="PS00096">
    <property type="entry name" value="SHMT"/>
    <property type="match status" value="1"/>
</dbReference>